<keyword id="KW-0002">3D-structure</keyword>
<keyword id="KW-0119">Carbohydrate metabolism</keyword>
<keyword id="KW-0963">Cytoplasm</keyword>
<keyword id="KW-0413">Isomerase</keyword>
<keyword id="KW-0448">Lipopolysaccharide biosynthesis</keyword>
<keyword id="KW-0479">Metal-binding</keyword>
<keyword id="KW-1185">Reference proteome</keyword>
<keyword id="KW-0862">Zinc</keyword>
<name>GMHA_PSEAE</name>
<proteinExistence type="evidence at protein level"/>
<gene>
    <name type="primary">gmhA</name>
    <name type="ordered locus">PA4425</name>
</gene>
<evidence type="ECO:0000250" key="1"/>
<evidence type="ECO:0000305" key="2"/>
<evidence type="ECO:0007829" key="3">
    <source>
        <dbReference type="PDB" id="1X92"/>
    </source>
</evidence>
<comment type="function">
    <text evidence="1">Catalyzes the isomerization of sedoheptulose 7-phosphate in D-glycero-D-manno-heptose 7-phosphate.</text>
</comment>
<comment type="catalytic activity">
    <reaction>
        <text>2 D-sedoheptulose 7-phosphate = D-glycero-alpha-D-manno-heptose 7-phosphate + D-glycero-beta-D-manno-heptose 7-phosphate</text>
        <dbReference type="Rhea" id="RHEA:27489"/>
        <dbReference type="ChEBI" id="CHEBI:57483"/>
        <dbReference type="ChEBI" id="CHEBI:60203"/>
        <dbReference type="ChEBI" id="CHEBI:60204"/>
        <dbReference type="EC" id="5.3.1.28"/>
    </reaction>
</comment>
<comment type="cofactor">
    <cofactor evidence="1">
        <name>Zn(2+)</name>
        <dbReference type="ChEBI" id="CHEBI:29105"/>
    </cofactor>
    <text evidence="1">Binds 1 zinc ion per subunit.</text>
</comment>
<comment type="pathway">
    <text>Carbohydrate biosynthesis; D-glycero-D-manno-heptose 7-phosphate biosynthesis; D-glycero-alpha-D-manno-heptose 7-phosphate and D-glycero-beta-D-manno-heptose 7-phosphate from sedoheptulose 7-phosphate: step 1/1.</text>
</comment>
<comment type="pathway">
    <text>Bacterial outer membrane biogenesis; LPS core biosynthesis.</text>
</comment>
<comment type="subunit">
    <text evidence="1">Homotetramer.</text>
</comment>
<comment type="subcellular location">
    <subcellularLocation>
        <location evidence="1">Cytoplasm</location>
    </subcellularLocation>
</comment>
<comment type="miscellaneous">
    <text evidence="1">The reaction produces a racemic mixture of D-glycero-alpha-D-manno-heptose 7-phosphate and D-glycero-beta-D-manno-heptose 7-phosphate.</text>
</comment>
<comment type="similarity">
    <text evidence="2">Belongs to the SIS family. GmhA subfamily.</text>
</comment>
<reference key="1">
    <citation type="journal article" date="2000" name="Nature">
        <title>Complete genome sequence of Pseudomonas aeruginosa PAO1, an opportunistic pathogen.</title>
        <authorList>
            <person name="Stover C.K."/>
            <person name="Pham X.-Q.T."/>
            <person name="Erwin A.L."/>
            <person name="Mizoguchi S.D."/>
            <person name="Warrener P."/>
            <person name="Hickey M.J."/>
            <person name="Brinkman F.S.L."/>
            <person name="Hufnagle W.O."/>
            <person name="Kowalik D.J."/>
            <person name="Lagrou M."/>
            <person name="Garber R.L."/>
            <person name="Goltry L."/>
            <person name="Tolentino E."/>
            <person name="Westbrock-Wadman S."/>
            <person name="Yuan Y."/>
            <person name="Brody L.L."/>
            <person name="Coulter S.N."/>
            <person name="Folger K.R."/>
            <person name="Kas A."/>
            <person name="Larbig K."/>
            <person name="Lim R.M."/>
            <person name="Smith K.A."/>
            <person name="Spencer D.H."/>
            <person name="Wong G.K.-S."/>
            <person name="Wu Z."/>
            <person name="Paulsen I.T."/>
            <person name="Reizer J."/>
            <person name="Saier M.H. Jr."/>
            <person name="Hancock R.E.W."/>
            <person name="Lory S."/>
            <person name="Olson M.V."/>
        </authorList>
    </citation>
    <scope>NUCLEOTIDE SEQUENCE [LARGE SCALE GENOMIC DNA]</scope>
    <source>
        <strain>ATCC 15692 / DSM 22644 / CIP 104116 / JCM 14847 / LMG 12228 / 1C / PRS 101 / PAO1</strain>
    </source>
</reference>
<reference key="2">
    <citation type="journal article" date="2002" name="Microbiology">
        <title>Novel pathways for biosynthesis of nucleotide-activated glycero-manno-heptose precursors of bacterial glycoproteins and cell surface polysaccharides.</title>
        <authorList>
            <person name="Valvano M.A."/>
            <person name="Messner P."/>
            <person name="Kosma P."/>
        </authorList>
    </citation>
    <scope>BIOSYNTHESIS OF NUCLEOTIDE-ACTIVATED GLYCERO-MANNO-HEPTOSE</scope>
</reference>
<reference key="3">
    <citation type="journal article" date="2008" name="J. Biol. Chem.">
        <title>Structure and function of sedoheptulose-7-phosphate isomerase, a critical enzyme for lipopolysaccharide biosynthesis and a target for antibiotic adjuvants.</title>
        <authorList>
            <person name="Taylor P.L."/>
            <person name="Blakely K.M."/>
            <person name="de Leon G.P."/>
            <person name="Walker J.R."/>
            <person name="McArthur F."/>
            <person name="Evdokimova E."/>
            <person name="Zhang K."/>
            <person name="Valvano M.A."/>
            <person name="Wright G.D."/>
            <person name="Junop M.S."/>
        </authorList>
    </citation>
    <scope>X-RAY CRYSTALLOGRAPHY (2.4 ANGSTROMS) OF APOENZYME AND IN COMPLEX WITH D-GLYCERO-ALPHA-D-MANNO-HEPTOSE 7-PHOSPHATE</scope>
</reference>
<feature type="chain" id="PRO_0000136542" description="Phosphoheptose isomerase">
    <location>
        <begin position="1"/>
        <end position="197"/>
    </location>
</feature>
<feature type="domain" description="SIS">
    <location>
        <begin position="36"/>
        <end position="197"/>
    </location>
</feature>
<feature type="binding site">
    <location>
        <begin position="51"/>
        <end position="53"/>
    </location>
    <ligand>
        <name>substrate</name>
    </ligand>
</feature>
<feature type="binding site" evidence="1">
    <location>
        <position position="60"/>
    </location>
    <ligand>
        <name>Zn(2+)</name>
        <dbReference type="ChEBI" id="CHEBI:29105"/>
    </ligand>
</feature>
<feature type="binding site">
    <location>
        <position position="64"/>
    </location>
    <ligand>
        <name>substrate</name>
    </ligand>
</feature>
<feature type="binding site" evidence="1">
    <location>
        <position position="64"/>
    </location>
    <ligand>
        <name>Zn(2+)</name>
        <dbReference type="ChEBI" id="CHEBI:29105"/>
    </ligand>
</feature>
<feature type="binding site" evidence="1">
    <location>
        <begin position="93"/>
        <end position="94"/>
    </location>
    <ligand>
        <name>substrate</name>
    </ligand>
</feature>
<feature type="binding site">
    <location>
        <begin position="119"/>
        <end position="121"/>
    </location>
    <ligand>
        <name>substrate</name>
    </ligand>
</feature>
<feature type="binding site">
    <location>
        <position position="124"/>
    </location>
    <ligand>
        <name>substrate</name>
    </ligand>
</feature>
<feature type="binding site">
    <location>
        <position position="174"/>
    </location>
    <ligand>
        <name>substrate</name>
    </ligand>
</feature>
<feature type="binding site" evidence="1">
    <location>
        <position position="174"/>
    </location>
    <ligand>
        <name>Zn(2+)</name>
        <dbReference type="ChEBI" id="CHEBI:29105"/>
    </ligand>
</feature>
<feature type="binding site" evidence="1">
    <location>
        <position position="182"/>
    </location>
    <ligand>
        <name>Zn(2+)</name>
        <dbReference type="ChEBI" id="CHEBI:29105"/>
    </ligand>
</feature>
<feature type="helix" evidence="3">
    <location>
        <begin position="3"/>
        <end position="24"/>
    </location>
</feature>
<feature type="helix" evidence="3">
    <location>
        <begin position="26"/>
        <end position="41"/>
    </location>
</feature>
<feature type="strand" evidence="3">
    <location>
        <begin position="46"/>
        <end position="49"/>
    </location>
</feature>
<feature type="helix" evidence="3">
    <location>
        <begin position="53"/>
        <end position="66"/>
    </location>
</feature>
<feature type="strand" evidence="3">
    <location>
        <begin position="69"/>
        <end position="71"/>
    </location>
</feature>
<feature type="strand" evidence="3">
    <location>
        <begin position="78"/>
        <end position="80"/>
    </location>
</feature>
<feature type="helix" evidence="3">
    <location>
        <begin position="85"/>
        <end position="94"/>
    </location>
</feature>
<feature type="helix" evidence="3">
    <location>
        <begin position="97"/>
        <end position="99"/>
    </location>
</feature>
<feature type="helix" evidence="3">
    <location>
        <begin position="102"/>
        <end position="108"/>
    </location>
</feature>
<feature type="strand" evidence="3">
    <location>
        <begin position="114"/>
        <end position="118"/>
    </location>
</feature>
<feature type="strand" evidence="3">
    <location>
        <begin position="120"/>
        <end position="122"/>
    </location>
</feature>
<feature type="helix" evidence="3">
    <location>
        <begin position="125"/>
        <end position="136"/>
    </location>
</feature>
<feature type="strand" evidence="3">
    <location>
        <begin position="140"/>
        <end position="145"/>
    </location>
</feature>
<feature type="helix" evidence="3">
    <location>
        <begin position="150"/>
        <end position="155"/>
    </location>
</feature>
<feature type="strand" evidence="3">
    <location>
        <begin position="161"/>
        <end position="164"/>
    </location>
</feature>
<feature type="helix" evidence="3">
    <location>
        <begin position="170"/>
        <end position="193"/>
    </location>
</feature>
<accession>Q9HVZ0</accession>
<organism>
    <name type="scientific">Pseudomonas aeruginosa (strain ATCC 15692 / DSM 22644 / CIP 104116 / JCM 14847 / LMG 12228 / 1C / PRS 101 / PAO1)</name>
    <dbReference type="NCBI Taxonomy" id="208964"/>
    <lineage>
        <taxon>Bacteria</taxon>
        <taxon>Pseudomonadati</taxon>
        <taxon>Pseudomonadota</taxon>
        <taxon>Gammaproteobacteria</taxon>
        <taxon>Pseudomonadales</taxon>
        <taxon>Pseudomonadaceae</taxon>
        <taxon>Pseudomonas</taxon>
    </lineage>
</organism>
<sequence length="197" mass="21413">MDMQHRIRQLFQASIETKQQALEVLPPYIEQASLVMVNALLNEGKILSCGNGGSAGDAQHFSSELLNRFERERPSLPAVALTTDSSTITSIANDYSYNEVFSKQIRALGQPGDVLLAISTSGNSANVIQAIQAAHDREMLVVALTGRDGGGMASLLLPEDVEIRVPSKITARIQEVHLLAIHCLCDLIDRQLFGSEE</sequence>
<protein>
    <recommendedName>
        <fullName>Phosphoheptose isomerase</fullName>
        <ecNumber>5.3.1.28</ecNumber>
    </recommendedName>
    <alternativeName>
        <fullName>Sedoheptulose 7-phosphate isomerase</fullName>
    </alternativeName>
</protein>
<dbReference type="EC" id="5.3.1.28"/>
<dbReference type="EMBL" id="AE004091">
    <property type="protein sequence ID" value="AAG07813.1"/>
    <property type="molecule type" value="Genomic_DNA"/>
</dbReference>
<dbReference type="PIR" id="A83092">
    <property type="entry name" value="A83092"/>
</dbReference>
<dbReference type="RefSeq" id="NP_253115.1">
    <property type="nucleotide sequence ID" value="NC_002516.2"/>
</dbReference>
<dbReference type="RefSeq" id="WP_003094149.1">
    <property type="nucleotide sequence ID" value="NZ_QZGE01000004.1"/>
</dbReference>
<dbReference type="PDB" id="1X92">
    <property type="method" value="X-ray"/>
    <property type="resolution" value="2.30 A"/>
    <property type="chains" value="A/B=1-197"/>
</dbReference>
<dbReference type="PDB" id="3BJZ">
    <property type="method" value="X-ray"/>
    <property type="resolution" value="2.40 A"/>
    <property type="chains" value="A/B/C/D=1-197"/>
</dbReference>
<dbReference type="PDBsum" id="1X92"/>
<dbReference type="PDBsum" id="3BJZ"/>
<dbReference type="SMR" id="Q9HVZ0"/>
<dbReference type="FunCoup" id="Q9HVZ0">
    <property type="interactions" value="86"/>
</dbReference>
<dbReference type="STRING" id="208964.PA4425"/>
<dbReference type="DrugBank" id="DB02470">
    <property type="generic name" value="D-Glycero-D-Mannopyranose-7-Phosphate"/>
</dbReference>
<dbReference type="PaxDb" id="208964-PA4425"/>
<dbReference type="DNASU" id="881196"/>
<dbReference type="GeneID" id="881196"/>
<dbReference type="KEGG" id="pae:PA4425"/>
<dbReference type="PATRIC" id="fig|208964.12.peg.4634"/>
<dbReference type="PseudoCAP" id="PA4425"/>
<dbReference type="HOGENOM" id="CLU_080999_3_1_6"/>
<dbReference type="InParanoid" id="Q9HVZ0"/>
<dbReference type="OrthoDB" id="9810929at2"/>
<dbReference type="PhylomeDB" id="Q9HVZ0"/>
<dbReference type="BioCyc" id="PAER208964:G1FZ6-4513-MONOMER"/>
<dbReference type="BRENDA" id="5.3.1.28">
    <property type="organism ID" value="5087"/>
</dbReference>
<dbReference type="UniPathway" id="UPA00041">
    <property type="reaction ID" value="UER00436"/>
</dbReference>
<dbReference type="UniPathway" id="UPA00958"/>
<dbReference type="EvolutionaryTrace" id="Q9HVZ0"/>
<dbReference type="Proteomes" id="UP000002438">
    <property type="component" value="Chromosome"/>
</dbReference>
<dbReference type="GO" id="GO:0005737">
    <property type="term" value="C:cytoplasm"/>
    <property type="evidence" value="ECO:0007669"/>
    <property type="project" value="UniProtKB-SubCell"/>
</dbReference>
<dbReference type="GO" id="GO:1990102">
    <property type="term" value="C:DnaA-DiaA complex"/>
    <property type="evidence" value="ECO:0000318"/>
    <property type="project" value="GO_Central"/>
</dbReference>
<dbReference type="GO" id="GO:0097367">
    <property type="term" value="F:carbohydrate derivative binding"/>
    <property type="evidence" value="ECO:0007669"/>
    <property type="project" value="InterPro"/>
</dbReference>
<dbReference type="GO" id="GO:0008968">
    <property type="term" value="F:D-sedoheptulose 7-phosphate isomerase activity"/>
    <property type="evidence" value="ECO:0007669"/>
    <property type="project" value="UniProtKB-UniRule"/>
</dbReference>
<dbReference type="GO" id="GO:0008270">
    <property type="term" value="F:zinc ion binding"/>
    <property type="evidence" value="ECO:0007669"/>
    <property type="project" value="UniProtKB-UniRule"/>
</dbReference>
<dbReference type="GO" id="GO:2001061">
    <property type="term" value="P:D-glycero-D-manno-heptose 7-phosphate biosynthetic process"/>
    <property type="evidence" value="ECO:0007669"/>
    <property type="project" value="UniProtKB-UniPathway"/>
</dbReference>
<dbReference type="GO" id="GO:0009244">
    <property type="term" value="P:lipopolysaccharide core region biosynthetic process"/>
    <property type="evidence" value="ECO:0007669"/>
    <property type="project" value="UniProtKB-UniPathway"/>
</dbReference>
<dbReference type="GO" id="GO:0032298">
    <property type="term" value="P:positive regulation of DNA-templated DNA replication initiation"/>
    <property type="evidence" value="ECO:0000318"/>
    <property type="project" value="GO_Central"/>
</dbReference>
<dbReference type="CDD" id="cd05006">
    <property type="entry name" value="SIS_GmhA"/>
    <property type="match status" value="1"/>
</dbReference>
<dbReference type="Gene3D" id="3.40.50.10490">
    <property type="entry name" value="Glucose-6-phosphate isomerase like protein, domain 1"/>
    <property type="match status" value="1"/>
</dbReference>
<dbReference type="HAMAP" id="MF_00067">
    <property type="entry name" value="GmhA"/>
    <property type="match status" value="1"/>
</dbReference>
<dbReference type="InterPro" id="IPR035461">
    <property type="entry name" value="GmhA/DiaA"/>
</dbReference>
<dbReference type="InterPro" id="IPR004515">
    <property type="entry name" value="Phosphoheptose_Isoase"/>
</dbReference>
<dbReference type="InterPro" id="IPR001347">
    <property type="entry name" value="SIS_dom"/>
</dbReference>
<dbReference type="InterPro" id="IPR046348">
    <property type="entry name" value="SIS_dom_sf"/>
</dbReference>
<dbReference type="InterPro" id="IPR050099">
    <property type="entry name" value="SIS_GmhA/DiaA_subfam"/>
</dbReference>
<dbReference type="NCBIfam" id="NF010546">
    <property type="entry name" value="PRK13936.1"/>
    <property type="match status" value="1"/>
</dbReference>
<dbReference type="PANTHER" id="PTHR30390:SF6">
    <property type="entry name" value="DNAA INITIATOR-ASSOCIATING PROTEIN DIAA"/>
    <property type="match status" value="1"/>
</dbReference>
<dbReference type="PANTHER" id="PTHR30390">
    <property type="entry name" value="SEDOHEPTULOSE 7-PHOSPHATE ISOMERASE / DNAA INITIATOR-ASSOCIATING FACTOR FOR REPLICATION INITIATION"/>
    <property type="match status" value="1"/>
</dbReference>
<dbReference type="Pfam" id="PF13580">
    <property type="entry name" value="SIS_2"/>
    <property type="match status" value="1"/>
</dbReference>
<dbReference type="SUPFAM" id="SSF53697">
    <property type="entry name" value="SIS domain"/>
    <property type="match status" value="1"/>
</dbReference>
<dbReference type="PROSITE" id="PS51464">
    <property type="entry name" value="SIS"/>
    <property type="match status" value="1"/>
</dbReference>